<keyword id="KW-0028">Amino-acid biosynthesis</keyword>
<keyword id="KW-0963">Cytoplasm</keyword>
<keyword id="KW-0368">Histidine biosynthesis</keyword>
<keyword id="KW-0456">Lyase</keyword>
<proteinExistence type="inferred from homology"/>
<name>HIS6_BACAH</name>
<organism>
    <name type="scientific">Bacillus thuringiensis (strain Al Hakam)</name>
    <dbReference type="NCBI Taxonomy" id="412694"/>
    <lineage>
        <taxon>Bacteria</taxon>
        <taxon>Bacillati</taxon>
        <taxon>Bacillota</taxon>
        <taxon>Bacilli</taxon>
        <taxon>Bacillales</taxon>
        <taxon>Bacillaceae</taxon>
        <taxon>Bacillus</taxon>
        <taxon>Bacillus cereus group</taxon>
    </lineage>
</organism>
<accession>A0RBM2</accession>
<protein>
    <recommendedName>
        <fullName evidence="1">Imidazole glycerol phosphate synthase subunit HisF</fullName>
        <ecNumber evidence="1">4.3.2.10</ecNumber>
    </recommendedName>
    <alternativeName>
        <fullName evidence="1">IGP synthase cyclase subunit</fullName>
    </alternativeName>
    <alternativeName>
        <fullName evidence="1">IGP synthase subunit HisF</fullName>
    </alternativeName>
    <alternativeName>
        <fullName evidence="1">ImGP synthase subunit HisF</fullName>
        <shortName evidence="1">IGPS subunit HisF</shortName>
    </alternativeName>
</protein>
<reference key="1">
    <citation type="journal article" date="2007" name="J. Bacteriol.">
        <title>The complete genome sequence of Bacillus thuringiensis Al Hakam.</title>
        <authorList>
            <person name="Challacombe J.F."/>
            <person name="Altherr M.R."/>
            <person name="Xie G."/>
            <person name="Bhotika S.S."/>
            <person name="Brown N."/>
            <person name="Bruce D."/>
            <person name="Campbell C.S."/>
            <person name="Campbell M.L."/>
            <person name="Chen J."/>
            <person name="Chertkov O."/>
            <person name="Cleland C."/>
            <person name="Dimitrijevic M."/>
            <person name="Doggett N.A."/>
            <person name="Fawcett J.J."/>
            <person name="Glavina T."/>
            <person name="Goodwin L.A."/>
            <person name="Green L.D."/>
            <person name="Han C.S."/>
            <person name="Hill K.K."/>
            <person name="Hitchcock P."/>
            <person name="Jackson P.J."/>
            <person name="Keim P."/>
            <person name="Kewalramani A.R."/>
            <person name="Longmire J."/>
            <person name="Lucas S."/>
            <person name="Malfatti S."/>
            <person name="Martinez D."/>
            <person name="McMurry K."/>
            <person name="Meincke L.J."/>
            <person name="Misra M."/>
            <person name="Moseman B.L."/>
            <person name="Mundt M."/>
            <person name="Munk A.C."/>
            <person name="Okinaka R.T."/>
            <person name="Parson-Quintana B."/>
            <person name="Reilly L.P."/>
            <person name="Richardson P."/>
            <person name="Robinson D.L."/>
            <person name="Saunders E."/>
            <person name="Tapia R."/>
            <person name="Tesmer J.G."/>
            <person name="Thayer N."/>
            <person name="Thompson L.S."/>
            <person name="Tice H."/>
            <person name="Ticknor L.O."/>
            <person name="Wills P.L."/>
            <person name="Gilna P."/>
            <person name="Brettin T.S."/>
        </authorList>
    </citation>
    <scope>NUCLEOTIDE SEQUENCE [LARGE SCALE GENOMIC DNA]</scope>
    <source>
        <strain>Al Hakam</strain>
    </source>
</reference>
<evidence type="ECO:0000255" key="1">
    <source>
        <dbReference type="HAMAP-Rule" id="MF_01013"/>
    </source>
</evidence>
<gene>
    <name evidence="1" type="primary">hisF</name>
    <name type="ordered locus">BALH_1265</name>
</gene>
<dbReference type="EC" id="4.3.2.10" evidence="1"/>
<dbReference type="EMBL" id="CP000485">
    <property type="protein sequence ID" value="ABK84615.1"/>
    <property type="molecule type" value="Genomic_DNA"/>
</dbReference>
<dbReference type="RefSeq" id="WP_000880095.1">
    <property type="nucleotide sequence ID" value="NC_008600.1"/>
</dbReference>
<dbReference type="SMR" id="A0RBM2"/>
<dbReference type="KEGG" id="btl:BALH_1265"/>
<dbReference type="HOGENOM" id="CLU_048577_4_0_9"/>
<dbReference type="UniPathway" id="UPA00031">
    <property type="reaction ID" value="UER00010"/>
</dbReference>
<dbReference type="GO" id="GO:0005737">
    <property type="term" value="C:cytoplasm"/>
    <property type="evidence" value="ECO:0007669"/>
    <property type="project" value="UniProtKB-SubCell"/>
</dbReference>
<dbReference type="GO" id="GO:0000107">
    <property type="term" value="F:imidazoleglycerol-phosphate synthase activity"/>
    <property type="evidence" value="ECO:0007669"/>
    <property type="project" value="UniProtKB-UniRule"/>
</dbReference>
<dbReference type="GO" id="GO:0016829">
    <property type="term" value="F:lyase activity"/>
    <property type="evidence" value="ECO:0007669"/>
    <property type="project" value="UniProtKB-KW"/>
</dbReference>
<dbReference type="GO" id="GO:0000105">
    <property type="term" value="P:L-histidine biosynthetic process"/>
    <property type="evidence" value="ECO:0007669"/>
    <property type="project" value="UniProtKB-UniRule"/>
</dbReference>
<dbReference type="CDD" id="cd04731">
    <property type="entry name" value="HisF"/>
    <property type="match status" value="1"/>
</dbReference>
<dbReference type="FunFam" id="3.20.20.70:FF:000006">
    <property type="entry name" value="Imidazole glycerol phosphate synthase subunit HisF"/>
    <property type="match status" value="1"/>
</dbReference>
<dbReference type="Gene3D" id="3.20.20.70">
    <property type="entry name" value="Aldolase class I"/>
    <property type="match status" value="1"/>
</dbReference>
<dbReference type="HAMAP" id="MF_01013">
    <property type="entry name" value="HisF"/>
    <property type="match status" value="1"/>
</dbReference>
<dbReference type="InterPro" id="IPR013785">
    <property type="entry name" value="Aldolase_TIM"/>
</dbReference>
<dbReference type="InterPro" id="IPR006062">
    <property type="entry name" value="His_biosynth"/>
</dbReference>
<dbReference type="InterPro" id="IPR004651">
    <property type="entry name" value="HisF"/>
</dbReference>
<dbReference type="InterPro" id="IPR050064">
    <property type="entry name" value="IGPS_HisA/HisF"/>
</dbReference>
<dbReference type="InterPro" id="IPR011060">
    <property type="entry name" value="RibuloseP-bd_barrel"/>
</dbReference>
<dbReference type="NCBIfam" id="TIGR00735">
    <property type="entry name" value="hisF"/>
    <property type="match status" value="1"/>
</dbReference>
<dbReference type="PANTHER" id="PTHR21235:SF2">
    <property type="entry name" value="IMIDAZOLE GLYCEROL PHOSPHATE SYNTHASE HISHF"/>
    <property type="match status" value="1"/>
</dbReference>
<dbReference type="PANTHER" id="PTHR21235">
    <property type="entry name" value="IMIDAZOLE GLYCEROL PHOSPHATE SYNTHASE SUBUNIT HISF/H IGP SYNTHASE SUBUNIT HISF/H"/>
    <property type="match status" value="1"/>
</dbReference>
<dbReference type="Pfam" id="PF00977">
    <property type="entry name" value="His_biosynth"/>
    <property type="match status" value="1"/>
</dbReference>
<dbReference type="SUPFAM" id="SSF51366">
    <property type="entry name" value="Ribulose-phoshate binding barrel"/>
    <property type="match status" value="1"/>
</dbReference>
<comment type="function">
    <text evidence="1">IGPS catalyzes the conversion of PRFAR and glutamine to IGP, AICAR and glutamate. The HisF subunit catalyzes the cyclization activity that produces IGP and AICAR from PRFAR using the ammonia provided by the HisH subunit.</text>
</comment>
<comment type="catalytic activity">
    <reaction evidence="1">
        <text>5-[(5-phospho-1-deoxy-D-ribulos-1-ylimino)methylamino]-1-(5-phospho-beta-D-ribosyl)imidazole-4-carboxamide + L-glutamine = D-erythro-1-(imidazol-4-yl)glycerol 3-phosphate + 5-amino-1-(5-phospho-beta-D-ribosyl)imidazole-4-carboxamide + L-glutamate + H(+)</text>
        <dbReference type="Rhea" id="RHEA:24793"/>
        <dbReference type="ChEBI" id="CHEBI:15378"/>
        <dbReference type="ChEBI" id="CHEBI:29985"/>
        <dbReference type="ChEBI" id="CHEBI:58278"/>
        <dbReference type="ChEBI" id="CHEBI:58359"/>
        <dbReference type="ChEBI" id="CHEBI:58475"/>
        <dbReference type="ChEBI" id="CHEBI:58525"/>
        <dbReference type="EC" id="4.3.2.10"/>
    </reaction>
</comment>
<comment type="pathway">
    <text evidence="1">Amino-acid biosynthesis; L-histidine biosynthesis; L-histidine from 5-phospho-alpha-D-ribose 1-diphosphate: step 5/9.</text>
</comment>
<comment type="subunit">
    <text evidence="1">Heterodimer of HisH and HisF.</text>
</comment>
<comment type="subcellular location">
    <subcellularLocation>
        <location evidence="1">Cytoplasm</location>
    </subcellularLocation>
</comment>
<comment type="similarity">
    <text evidence="1">Belongs to the HisA/HisF family.</text>
</comment>
<sequence length="252" mass="27002">MLAKRIIPCLDVKEGRVVKGVNFIGLQDVGDPVEIAALYNDAGADEIVFLDITATHEGRKTIIDVVKKTASKVFIPLTVGGGISSVKDMYKLLRAGADKVSINSAAVRNPKLIEEGAQHFGSQCIVVAIDARKVAEGKWNVYVNGGRVDTGMDAIEWAKRVVMLGAGEILLTSMDADGTKNGYDLRLTEEISKSVSVPVIASGGCGHADHIIEVFQKTTVDAALAASIFHYGEATVQDVKRKLRNANVEVRL</sequence>
<feature type="chain" id="PRO_1000063026" description="Imidazole glycerol phosphate synthase subunit HisF">
    <location>
        <begin position="1"/>
        <end position="252"/>
    </location>
</feature>
<feature type="active site" evidence="1">
    <location>
        <position position="11"/>
    </location>
</feature>
<feature type="active site" evidence="1">
    <location>
        <position position="130"/>
    </location>
</feature>